<evidence type="ECO:0000250" key="1"/>
<evidence type="ECO:0000255" key="2">
    <source>
        <dbReference type="PROSITE-ProRule" id="PRU00407"/>
    </source>
</evidence>
<evidence type="ECO:0000255" key="3">
    <source>
        <dbReference type="PROSITE-ProRule" id="PRU01189"/>
    </source>
</evidence>
<evidence type="ECO:0000305" key="4"/>
<proteinExistence type="evidence at transcript level"/>
<protein>
    <recommendedName>
        <fullName>Nuclear receptor subfamily 2 group E member 1</fullName>
    </recommendedName>
    <alternativeName>
        <fullName>Nuclear receptor TLX</fullName>
    </alternativeName>
    <alternativeName>
        <fullName>Protein tailless homolog</fullName>
        <shortName>Tll</shortName>
    </alternativeName>
</protein>
<gene>
    <name type="primary">nr2e1</name>
    <name type="synonym">tll</name>
    <name type="synonym">tlx</name>
</gene>
<organism>
    <name type="scientific">Oryzias latipes</name>
    <name type="common">Japanese rice fish</name>
    <name type="synonym">Japanese killifish</name>
    <dbReference type="NCBI Taxonomy" id="8090"/>
    <lineage>
        <taxon>Eukaryota</taxon>
        <taxon>Metazoa</taxon>
        <taxon>Chordata</taxon>
        <taxon>Craniata</taxon>
        <taxon>Vertebrata</taxon>
        <taxon>Euteleostomi</taxon>
        <taxon>Actinopterygii</taxon>
        <taxon>Neopterygii</taxon>
        <taxon>Teleostei</taxon>
        <taxon>Neoteleostei</taxon>
        <taxon>Acanthomorphata</taxon>
        <taxon>Ovalentaria</taxon>
        <taxon>Atherinomorphae</taxon>
        <taxon>Beloniformes</taxon>
        <taxon>Adrianichthyidae</taxon>
        <taxon>Oryziinae</taxon>
        <taxon>Oryzias</taxon>
    </lineage>
</organism>
<keyword id="KW-0217">Developmental protein</keyword>
<keyword id="KW-0238">DNA-binding</keyword>
<keyword id="KW-0479">Metal-binding</keyword>
<keyword id="KW-0539">Nucleus</keyword>
<keyword id="KW-0675">Receptor</keyword>
<keyword id="KW-1185">Reference proteome</keyword>
<keyword id="KW-0804">Transcription</keyword>
<keyword id="KW-0805">Transcription regulation</keyword>
<keyword id="KW-0862">Zinc</keyword>
<keyword id="KW-0863">Zinc-finger</keyword>
<comment type="function">
    <text evidence="1">Orphan receptor that binds DNA as a monomer to hormone response elements (HRE) containing an extended core motif half-site sequence 5'-AAGGTCA-3' in which the 5' flanking nucleotides participate in determining receptor specificity. May be involved in the regulation of early eye development.</text>
</comment>
<comment type="subunit">
    <text evidence="1">Monomer.</text>
</comment>
<comment type="subcellular location">
    <subcellularLocation>
        <location evidence="2">Nucleus</location>
    </subcellularLocation>
</comment>
<comment type="similarity">
    <text evidence="4">Belongs to the nuclear hormone receptor family. NR2 subfamily.</text>
</comment>
<reference key="1">
    <citation type="submission" date="1998-12" db="EMBL/GenBank/DDBJ databases">
        <authorList>
            <person name="Henrich T."/>
            <person name="Loosli F."/>
            <person name="Wittbrodt J."/>
        </authorList>
    </citation>
    <scope>NUCLEOTIDE SEQUENCE [MRNA]</scope>
</reference>
<accession>Q9YGL3</accession>
<feature type="chain" id="PRO_0000053595" description="Nuclear receptor subfamily 2 group E member 1">
    <location>
        <begin position="1"/>
        <end position="396"/>
    </location>
</feature>
<feature type="domain" description="NR LBD" evidence="3">
    <location>
        <begin position="153"/>
        <end position="394"/>
    </location>
</feature>
<feature type="DNA-binding region" description="Nuclear receptor" evidence="2">
    <location>
        <begin position="24"/>
        <end position="101"/>
    </location>
</feature>
<feature type="zinc finger region" description="NR C4-type" evidence="2">
    <location>
        <begin position="27"/>
        <end position="47"/>
    </location>
</feature>
<feature type="zinc finger region" description="NR C4-type" evidence="2">
    <location>
        <begin position="63"/>
        <end position="89"/>
    </location>
</feature>
<sequence>MSKPTGSTSGCLDILNVKSSRILDIPCKVCGDRSSGKHYGVYACDGCSGFFKRSIRRNRIYLCKSGSQGGCPVDKTHRNQCRACRLKKCLEVNMNKDAVQHERGPRTSTIRKQVALYFRGHKEVNGSSTHFPGSSLPGPPFFTTVTQLEPHNLEMSSVATTPERQAIVGLAQPTPKYPHEVSGTPMYLYEVATESVCESAARLLFMSIKWAKSVPAFSTLPLSDQLILLEDAWRELFVLGIAQWAIPVDSTTLLAVSGLNSENMEAQRMNKIMAEIQALQEVVTRFRQMRLDATEFACLKCIVTFKAVPTQGSAELRAFRNASAIAALQDEAQLTLNSYIHTRYPTQPCRFGKLLLLLPALRSVSPSTIEEVFFKKNIGNVPITRLLSDMYKSSDI</sequence>
<dbReference type="EMBL" id="AJ131390">
    <property type="protein sequence ID" value="CAB38085.1"/>
    <property type="molecule type" value="mRNA"/>
</dbReference>
<dbReference type="RefSeq" id="NP_001098343.1">
    <property type="nucleotide sequence ID" value="NM_001104873.1"/>
</dbReference>
<dbReference type="SMR" id="Q9YGL3"/>
<dbReference type="FunCoup" id="Q9YGL3">
    <property type="interactions" value="419"/>
</dbReference>
<dbReference type="STRING" id="8090.ENSORLP00000016838"/>
<dbReference type="GeneID" id="100049530"/>
<dbReference type="KEGG" id="ola:100049530"/>
<dbReference type="CTD" id="7101"/>
<dbReference type="eggNOG" id="KOG3575">
    <property type="taxonomic scope" value="Eukaryota"/>
</dbReference>
<dbReference type="InParanoid" id="Q9YGL3"/>
<dbReference type="OrthoDB" id="10045640at2759"/>
<dbReference type="Proteomes" id="UP000001038">
    <property type="component" value="Unplaced"/>
</dbReference>
<dbReference type="Proteomes" id="UP000265180">
    <property type="component" value="Chromosome 9"/>
</dbReference>
<dbReference type="Proteomes" id="UP000265200">
    <property type="component" value="Chromosome 9"/>
</dbReference>
<dbReference type="GO" id="GO:0005634">
    <property type="term" value="C:nucleus"/>
    <property type="evidence" value="ECO:0007669"/>
    <property type="project" value="UniProtKB-SubCell"/>
</dbReference>
<dbReference type="GO" id="GO:0004879">
    <property type="term" value="F:nuclear receptor activity"/>
    <property type="evidence" value="ECO:0000318"/>
    <property type="project" value="GO_Central"/>
</dbReference>
<dbReference type="GO" id="GO:0000978">
    <property type="term" value="F:RNA polymerase II cis-regulatory region sequence-specific DNA binding"/>
    <property type="evidence" value="ECO:0000318"/>
    <property type="project" value="GO_Central"/>
</dbReference>
<dbReference type="GO" id="GO:0008270">
    <property type="term" value="F:zinc ion binding"/>
    <property type="evidence" value="ECO:0007669"/>
    <property type="project" value="UniProtKB-KW"/>
</dbReference>
<dbReference type="GO" id="GO:0030154">
    <property type="term" value="P:cell differentiation"/>
    <property type="evidence" value="ECO:0000318"/>
    <property type="project" value="GO_Central"/>
</dbReference>
<dbReference type="GO" id="GO:0000122">
    <property type="term" value="P:negative regulation of transcription by RNA polymerase II"/>
    <property type="evidence" value="ECO:0000318"/>
    <property type="project" value="GO_Central"/>
</dbReference>
<dbReference type="CDD" id="cd07163">
    <property type="entry name" value="NR_DBD_TLX"/>
    <property type="match status" value="1"/>
</dbReference>
<dbReference type="CDD" id="cd06950">
    <property type="entry name" value="NR_LBD_Tlx_PNR_like"/>
    <property type="match status" value="1"/>
</dbReference>
<dbReference type="FunFam" id="3.30.50.10:FF:000019">
    <property type="entry name" value="Nuclear receptor subfamily 2 group E member"/>
    <property type="match status" value="1"/>
</dbReference>
<dbReference type="FunFam" id="1.10.565.10:FF:000019">
    <property type="entry name" value="Nuclear receptor subfamily 2 group E member 1"/>
    <property type="match status" value="1"/>
</dbReference>
<dbReference type="Gene3D" id="3.30.50.10">
    <property type="entry name" value="Erythroid Transcription Factor GATA-1, subunit A"/>
    <property type="match status" value="1"/>
</dbReference>
<dbReference type="Gene3D" id="1.10.565.10">
    <property type="entry name" value="Retinoid X Receptor"/>
    <property type="match status" value="1"/>
</dbReference>
<dbReference type="InterPro" id="IPR035500">
    <property type="entry name" value="NHR-like_dom_sf"/>
</dbReference>
<dbReference type="InterPro" id="IPR000536">
    <property type="entry name" value="Nucl_hrmn_rcpt_lig-bd"/>
</dbReference>
<dbReference type="InterPro" id="IPR050274">
    <property type="entry name" value="Nuclear_hormone_rcpt_NR2"/>
</dbReference>
<dbReference type="InterPro" id="IPR001723">
    <property type="entry name" value="Nuclear_hrmn_rcpt"/>
</dbReference>
<dbReference type="InterPro" id="IPR001628">
    <property type="entry name" value="Znf_hrmn_rcpt"/>
</dbReference>
<dbReference type="InterPro" id="IPR013088">
    <property type="entry name" value="Znf_NHR/GATA"/>
</dbReference>
<dbReference type="PANTHER" id="PTHR24083">
    <property type="entry name" value="NUCLEAR HORMONE RECEPTOR"/>
    <property type="match status" value="1"/>
</dbReference>
<dbReference type="Pfam" id="PF00104">
    <property type="entry name" value="Hormone_recep"/>
    <property type="match status" value="1"/>
</dbReference>
<dbReference type="Pfam" id="PF00105">
    <property type="entry name" value="zf-C4"/>
    <property type="match status" value="1"/>
</dbReference>
<dbReference type="PRINTS" id="PR00398">
    <property type="entry name" value="STRDHORMONER"/>
</dbReference>
<dbReference type="PRINTS" id="PR00047">
    <property type="entry name" value="STROIDFINGER"/>
</dbReference>
<dbReference type="SMART" id="SM00430">
    <property type="entry name" value="HOLI"/>
    <property type="match status" value="1"/>
</dbReference>
<dbReference type="SMART" id="SM00399">
    <property type="entry name" value="ZnF_C4"/>
    <property type="match status" value="1"/>
</dbReference>
<dbReference type="SUPFAM" id="SSF57716">
    <property type="entry name" value="Glucocorticoid receptor-like (DNA-binding domain)"/>
    <property type="match status" value="1"/>
</dbReference>
<dbReference type="SUPFAM" id="SSF48508">
    <property type="entry name" value="Nuclear receptor ligand-binding domain"/>
    <property type="match status" value="1"/>
</dbReference>
<dbReference type="PROSITE" id="PS51843">
    <property type="entry name" value="NR_LBD"/>
    <property type="match status" value="1"/>
</dbReference>
<dbReference type="PROSITE" id="PS00031">
    <property type="entry name" value="NUCLEAR_REC_DBD_1"/>
    <property type="match status" value="1"/>
</dbReference>
<dbReference type="PROSITE" id="PS51030">
    <property type="entry name" value="NUCLEAR_REC_DBD_2"/>
    <property type="match status" value="1"/>
</dbReference>
<name>NR2E1_ORYLA</name>